<feature type="signal peptide" evidence="1">
    <location>
        <begin position="1"/>
        <end position="21"/>
    </location>
</feature>
<feature type="chain" id="PRO_0000259100" description="Tol-Pal system protein TolB" evidence="1">
    <location>
        <begin position="22"/>
        <end position="430"/>
    </location>
</feature>
<proteinExistence type="inferred from homology"/>
<keyword id="KW-0131">Cell cycle</keyword>
<keyword id="KW-0132">Cell division</keyword>
<keyword id="KW-0574">Periplasm</keyword>
<keyword id="KW-0732">Signal</keyword>
<accession>Q1CAF2</accession>
<name>TOLB_YERPA</name>
<protein>
    <recommendedName>
        <fullName evidence="1">Tol-Pal system protein TolB</fullName>
    </recommendedName>
</protein>
<dbReference type="EMBL" id="CP000308">
    <property type="protein sequence ID" value="ABG12570.1"/>
    <property type="molecule type" value="Genomic_DNA"/>
</dbReference>
<dbReference type="RefSeq" id="WP_002210738.1">
    <property type="nucleotide sequence ID" value="NZ_CP009906.1"/>
</dbReference>
<dbReference type="SMR" id="Q1CAF2"/>
<dbReference type="GeneID" id="57977261"/>
<dbReference type="KEGG" id="ypa:YPA_0602"/>
<dbReference type="Proteomes" id="UP000001971">
    <property type="component" value="Chromosome"/>
</dbReference>
<dbReference type="GO" id="GO:0042597">
    <property type="term" value="C:periplasmic space"/>
    <property type="evidence" value="ECO:0007669"/>
    <property type="project" value="UniProtKB-SubCell"/>
</dbReference>
<dbReference type="GO" id="GO:0051301">
    <property type="term" value="P:cell division"/>
    <property type="evidence" value="ECO:0007669"/>
    <property type="project" value="UniProtKB-UniRule"/>
</dbReference>
<dbReference type="GO" id="GO:0017038">
    <property type="term" value="P:protein import"/>
    <property type="evidence" value="ECO:0007669"/>
    <property type="project" value="InterPro"/>
</dbReference>
<dbReference type="FunFam" id="2.120.10.30:FF:000022">
    <property type="entry name" value="Tol-Pal system protein TolB"/>
    <property type="match status" value="1"/>
</dbReference>
<dbReference type="Gene3D" id="2.120.10.30">
    <property type="entry name" value="TolB, C-terminal domain"/>
    <property type="match status" value="1"/>
</dbReference>
<dbReference type="Gene3D" id="3.40.50.10070">
    <property type="entry name" value="TolB, N-terminal domain"/>
    <property type="match status" value="1"/>
</dbReference>
<dbReference type="HAMAP" id="MF_00671">
    <property type="entry name" value="TolB"/>
    <property type="match status" value="1"/>
</dbReference>
<dbReference type="InterPro" id="IPR011042">
    <property type="entry name" value="6-blade_b-propeller_TolB-like"/>
</dbReference>
<dbReference type="InterPro" id="IPR011659">
    <property type="entry name" value="PD40"/>
</dbReference>
<dbReference type="InterPro" id="IPR014167">
    <property type="entry name" value="Tol-Pal_TolB"/>
</dbReference>
<dbReference type="InterPro" id="IPR007195">
    <property type="entry name" value="TolB_N"/>
</dbReference>
<dbReference type="NCBIfam" id="TIGR02800">
    <property type="entry name" value="propeller_TolB"/>
    <property type="match status" value="1"/>
</dbReference>
<dbReference type="PANTHER" id="PTHR36842:SF1">
    <property type="entry name" value="PROTEIN TOLB"/>
    <property type="match status" value="1"/>
</dbReference>
<dbReference type="PANTHER" id="PTHR36842">
    <property type="entry name" value="PROTEIN TOLB HOMOLOG"/>
    <property type="match status" value="1"/>
</dbReference>
<dbReference type="Pfam" id="PF07676">
    <property type="entry name" value="PD40"/>
    <property type="match status" value="4"/>
</dbReference>
<dbReference type="Pfam" id="PF04052">
    <property type="entry name" value="TolB_N"/>
    <property type="match status" value="1"/>
</dbReference>
<dbReference type="SUPFAM" id="SSF52964">
    <property type="entry name" value="TolB, N-terminal domain"/>
    <property type="match status" value="1"/>
</dbReference>
<dbReference type="SUPFAM" id="SSF69304">
    <property type="entry name" value="Tricorn protease N-terminal domain"/>
    <property type="match status" value="1"/>
</dbReference>
<reference key="1">
    <citation type="journal article" date="2006" name="J. Bacteriol.">
        <title>Complete genome sequence of Yersinia pestis strains Antiqua and Nepal516: evidence of gene reduction in an emerging pathogen.</title>
        <authorList>
            <person name="Chain P.S.G."/>
            <person name="Hu P."/>
            <person name="Malfatti S.A."/>
            <person name="Radnedge L."/>
            <person name="Larimer F."/>
            <person name="Vergez L.M."/>
            <person name="Worsham P."/>
            <person name="Chu M.C."/>
            <person name="Andersen G.L."/>
        </authorList>
    </citation>
    <scope>NUCLEOTIDE SEQUENCE [LARGE SCALE GENOMIC DNA]</scope>
    <source>
        <strain>Antiqua</strain>
    </source>
</reference>
<gene>
    <name evidence="1" type="primary">tolB</name>
    <name type="ordered locus">YPA_0602</name>
</gene>
<sequence length="430" mass="46045">MKQAFRVALGFLVLWASVLHAEVRIEITQGVDSARPIGVVPFKWMGPGTPPEEIGAIVGADLRNSGKFNPIDAARMPQQPSTAAEVTPAAWTALGIDAVVVGQVQPSADGSYVVSYQLVDTSGSAGSILAQNQYKVTKQWLRYSAHTVSDEVFEKLTGIKGAFRTRIAYVVKTNGGKFPHELRVSDYDGYNQFVVHRSPEPLMSPAWSPDGSKIAYVTFESGKSALVIQTLANGAIRQVASFPRHNGAPAFSPDGTKLAFALSKSGSLNLYVMDLASGQISQVTDGRSNNTEPSWFPDSQNLAYTSDQGGRPQVYKVNINGGVPQRITWEGSQNQNADVSPDGKFLVLVSSNGGAQHIAKQDLETGAVQVLTDTLLDETPSIAPNGTMVIYSSTQGLGSVLQLVSTDGRFKARLPATDGQVKFPAWSPYL</sequence>
<organism>
    <name type="scientific">Yersinia pestis bv. Antiqua (strain Antiqua)</name>
    <dbReference type="NCBI Taxonomy" id="360102"/>
    <lineage>
        <taxon>Bacteria</taxon>
        <taxon>Pseudomonadati</taxon>
        <taxon>Pseudomonadota</taxon>
        <taxon>Gammaproteobacteria</taxon>
        <taxon>Enterobacterales</taxon>
        <taxon>Yersiniaceae</taxon>
        <taxon>Yersinia</taxon>
    </lineage>
</organism>
<comment type="function">
    <text evidence="1">Part of the Tol-Pal system, which plays a role in outer membrane invagination during cell division and is important for maintaining outer membrane integrity. TolB occupies a key intermediary position in the Tol-Pal system because it communicates directly with both membrane-embedded components, Pal in the outer membrane and TolA in the inner membrane.</text>
</comment>
<comment type="subunit">
    <text evidence="1">The Tol-Pal system is composed of five core proteins: the inner membrane proteins TolA, TolQ and TolR, the periplasmic protein TolB and the outer membrane protein Pal. They form a network linking the inner and outer membranes and the peptidoglycan layer.</text>
</comment>
<comment type="subcellular location">
    <subcellularLocation>
        <location evidence="1">Periplasm</location>
    </subcellularLocation>
</comment>
<comment type="similarity">
    <text evidence="1">Belongs to the TolB family.</text>
</comment>
<evidence type="ECO:0000255" key="1">
    <source>
        <dbReference type="HAMAP-Rule" id="MF_00671"/>
    </source>
</evidence>